<keyword id="KW-0012">Acyltransferase</keyword>
<keyword id="KW-0449">Lipoprotein</keyword>
<keyword id="KW-0472">Membrane</keyword>
<keyword id="KW-0564">Palmitate</keyword>
<keyword id="KW-1185">Reference proteome</keyword>
<keyword id="KW-0808">Transferase</keyword>
<keyword id="KW-0812">Transmembrane</keyword>
<keyword id="KW-1133">Transmembrane helix</keyword>
<dbReference type="EC" id="2.3.1.225"/>
<dbReference type="EMBL" id="CR380957">
    <property type="protein sequence ID" value="CAG61460.1"/>
    <property type="molecule type" value="Genomic_DNA"/>
</dbReference>
<dbReference type="RefSeq" id="XP_448499.1">
    <property type="nucleotide sequence ID" value="XM_448499.1"/>
</dbReference>
<dbReference type="FunCoup" id="Q6FMP5">
    <property type="interactions" value="948"/>
</dbReference>
<dbReference type="STRING" id="284593.Q6FMP5"/>
<dbReference type="EnsemblFungi" id="CAGL0K06347g-T">
    <property type="protein sequence ID" value="CAGL0K06347g-T-p1"/>
    <property type="gene ID" value="CAGL0K06347g"/>
</dbReference>
<dbReference type="KEGG" id="cgr:2890431"/>
<dbReference type="CGD" id="CAL0133845">
    <property type="gene designation" value="CAGL0K06347g"/>
</dbReference>
<dbReference type="VEuPathDB" id="FungiDB:CAGL0K06347g"/>
<dbReference type="eggNOG" id="KOG1311">
    <property type="taxonomic scope" value="Eukaryota"/>
</dbReference>
<dbReference type="HOGENOM" id="CLU_064801_0_0_1"/>
<dbReference type="InParanoid" id="Q6FMP5"/>
<dbReference type="OMA" id="YCVWIGT"/>
<dbReference type="Proteomes" id="UP000002428">
    <property type="component" value="Chromosome K"/>
</dbReference>
<dbReference type="GO" id="GO:0005783">
    <property type="term" value="C:endoplasmic reticulum"/>
    <property type="evidence" value="ECO:0007669"/>
    <property type="project" value="TreeGrafter"/>
</dbReference>
<dbReference type="GO" id="GO:0005794">
    <property type="term" value="C:Golgi apparatus"/>
    <property type="evidence" value="ECO:0007669"/>
    <property type="project" value="TreeGrafter"/>
</dbReference>
<dbReference type="GO" id="GO:0016020">
    <property type="term" value="C:membrane"/>
    <property type="evidence" value="ECO:0007669"/>
    <property type="project" value="UniProtKB-SubCell"/>
</dbReference>
<dbReference type="GO" id="GO:0019706">
    <property type="term" value="F:protein-cysteine S-palmitoyltransferase activity"/>
    <property type="evidence" value="ECO:0007669"/>
    <property type="project" value="UniProtKB-EC"/>
</dbReference>
<dbReference type="GO" id="GO:0006612">
    <property type="term" value="P:protein targeting to membrane"/>
    <property type="evidence" value="ECO:0007669"/>
    <property type="project" value="TreeGrafter"/>
</dbReference>
<dbReference type="InterPro" id="IPR001594">
    <property type="entry name" value="Palmitoyltrfase_DHHC"/>
</dbReference>
<dbReference type="InterPro" id="IPR039859">
    <property type="entry name" value="PFA4/ZDH16/20/ERF2-like"/>
</dbReference>
<dbReference type="PANTHER" id="PTHR22883:SF23">
    <property type="entry name" value="PALMITOYLTRANSFERASE ZDHHC6"/>
    <property type="match status" value="1"/>
</dbReference>
<dbReference type="PANTHER" id="PTHR22883">
    <property type="entry name" value="ZINC FINGER DHHC DOMAIN CONTAINING PROTEIN"/>
    <property type="match status" value="1"/>
</dbReference>
<dbReference type="Pfam" id="PF01529">
    <property type="entry name" value="DHHC"/>
    <property type="match status" value="1"/>
</dbReference>
<dbReference type="PROSITE" id="PS50216">
    <property type="entry name" value="DHHC"/>
    <property type="match status" value="1"/>
</dbReference>
<reference key="1">
    <citation type="journal article" date="2004" name="Nature">
        <title>Genome evolution in yeasts.</title>
        <authorList>
            <person name="Dujon B."/>
            <person name="Sherman D."/>
            <person name="Fischer G."/>
            <person name="Durrens P."/>
            <person name="Casaregola S."/>
            <person name="Lafontaine I."/>
            <person name="de Montigny J."/>
            <person name="Marck C."/>
            <person name="Neuveglise C."/>
            <person name="Talla E."/>
            <person name="Goffard N."/>
            <person name="Frangeul L."/>
            <person name="Aigle M."/>
            <person name="Anthouard V."/>
            <person name="Babour A."/>
            <person name="Barbe V."/>
            <person name="Barnay S."/>
            <person name="Blanchin S."/>
            <person name="Beckerich J.-M."/>
            <person name="Beyne E."/>
            <person name="Bleykasten C."/>
            <person name="Boisrame A."/>
            <person name="Boyer J."/>
            <person name="Cattolico L."/>
            <person name="Confanioleri F."/>
            <person name="de Daruvar A."/>
            <person name="Despons L."/>
            <person name="Fabre E."/>
            <person name="Fairhead C."/>
            <person name="Ferry-Dumazet H."/>
            <person name="Groppi A."/>
            <person name="Hantraye F."/>
            <person name="Hennequin C."/>
            <person name="Jauniaux N."/>
            <person name="Joyet P."/>
            <person name="Kachouri R."/>
            <person name="Kerrest A."/>
            <person name="Koszul R."/>
            <person name="Lemaire M."/>
            <person name="Lesur I."/>
            <person name="Ma L."/>
            <person name="Muller H."/>
            <person name="Nicaud J.-M."/>
            <person name="Nikolski M."/>
            <person name="Oztas S."/>
            <person name="Ozier-Kalogeropoulos O."/>
            <person name="Pellenz S."/>
            <person name="Potier S."/>
            <person name="Richard G.-F."/>
            <person name="Straub M.-L."/>
            <person name="Suleau A."/>
            <person name="Swennen D."/>
            <person name="Tekaia F."/>
            <person name="Wesolowski-Louvel M."/>
            <person name="Westhof E."/>
            <person name="Wirth B."/>
            <person name="Zeniou-Meyer M."/>
            <person name="Zivanovic Y."/>
            <person name="Bolotin-Fukuhara M."/>
            <person name="Thierry A."/>
            <person name="Bouchier C."/>
            <person name="Caudron B."/>
            <person name="Scarpelli C."/>
            <person name="Gaillardin C."/>
            <person name="Weissenbach J."/>
            <person name="Wincker P."/>
            <person name="Souciet J.-L."/>
        </authorList>
    </citation>
    <scope>NUCLEOTIDE SEQUENCE [LARGE SCALE GENOMIC DNA]</scope>
    <source>
        <strain>ATCC 2001 / BCRC 20586 / JCM 3761 / NBRC 0622 / NRRL Y-65 / CBS 138</strain>
    </source>
</reference>
<name>PFA5_CANGA</name>
<protein>
    <recommendedName>
        <fullName>Palmitoyltransferase PFA5</fullName>
        <ecNumber>2.3.1.225</ecNumber>
    </recommendedName>
    <alternativeName>
        <fullName>Protein fatty acyltransferase 5</fullName>
    </alternativeName>
</protein>
<feature type="chain" id="PRO_0000212976" description="Palmitoyltransferase PFA5">
    <location>
        <begin position="1"/>
        <end position="352"/>
    </location>
</feature>
<feature type="transmembrane region" description="Helical" evidence="2">
    <location>
        <begin position="12"/>
        <end position="32"/>
    </location>
</feature>
<feature type="transmembrane region" description="Helical" evidence="2">
    <location>
        <begin position="53"/>
        <end position="73"/>
    </location>
</feature>
<feature type="transmembrane region" description="Helical" evidence="2">
    <location>
        <begin position="159"/>
        <end position="179"/>
    </location>
</feature>
<feature type="transmembrane region" description="Helical" evidence="2">
    <location>
        <begin position="195"/>
        <end position="215"/>
    </location>
</feature>
<feature type="domain" description="DHHC" evidence="3">
    <location>
        <begin position="114"/>
        <end position="164"/>
    </location>
</feature>
<feature type="active site" description="S-palmitoyl cysteine intermediate" evidence="1">
    <location>
        <position position="144"/>
    </location>
</feature>
<sequence length="352" mass="41128">MGFAEWRLRNKYWTIYIVPLVVLLLMIYGTWAYCHKLCYERVYRDFGHKATAIGLICTCCVLDALIIAIWVLIVSCGPGHQPGVAPHLLVDSADLENTTVAPNCYQSDPHGYPVWCSNCQSLKVGRTKHSSHQGHCVPRFDHYCVWLGAVIGFKNYRLFVQFVFYFAVLLMIVWITISVYIRDIRQYHARLNANLIVLLIISGIGWLMTSGLFVSYIYYMSQNLTSIEVIDLKKRKRTPELSMQRLYCYYNSDDHYRYVVKLDNDFKGSVYKKHWLKNIKEFMGSNPMLWFIPLPQYWHESPLANGERDVNTIVSPYQEEVGPHTIDYIKKRIESGEYIHKFKEPGREKTHL</sequence>
<comment type="catalytic activity">
    <reaction>
        <text>L-cysteinyl-[protein] + hexadecanoyl-CoA = S-hexadecanoyl-L-cysteinyl-[protein] + CoA</text>
        <dbReference type="Rhea" id="RHEA:36683"/>
        <dbReference type="Rhea" id="RHEA-COMP:10131"/>
        <dbReference type="Rhea" id="RHEA-COMP:11032"/>
        <dbReference type="ChEBI" id="CHEBI:29950"/>
        <dbReference type="ChEBI" id="CHEBI:57287"/>
        <dbReference type="ChEBI" id="CHEBI:57379"/>
        <dbReference type="ChEBI" id="CHEBI:74151"/>
        <dbReference type="EC" id="2.3.1.225"/>
    </reaction>
</comment>
<comment type="subcellular location">
    <subcellularLocation>
        <location evidence="4">Membrane</location>
        <topology evidence="4">Multi-pass membrane protein</topology>
    </subcellularLocation>
</comment>
<comment type="domain">
    <text evidence="1">The DHHC domain is required for palmitoyltransferase activity.</text>
</comment>
<comment type="similarity">
    <text evidence="4">Belongs to the DHHC palmitoyltransferase family. PFA5 subfamily.</text>
</comment>
<accession>Q6FMP5</accession>
<evidence type="ECO:0000250" key="1"/>
<evidence type="ECO:0000255" key="2"/>
<evidence type="ECO:0000255" key="3">
    <source>
        <dbReference type="PROSITE-ProRule" id="PRU00067"/>
    </source>
</evidence>
<evidence type="ECO:0000305" key="4"/>
<organism>
    <name type="scientific">Candida glabrata (strain ATCC 2001 / BCRC 20586 / JCM 3761 / NBRC 0622 / NRRL Y-65 / CBS 138)</name>
    <name type="common">Yeast</name>
    <name type="synonym">Nakaseomyces glabratus</name>
    <dbReference type="NCBI Taxonomy" id="284593"/>
    <lineage>
        <taxon>Eukaryota</taxon>
        <taxon>Fungi</taxon>
        <taxon>Dikarya</taxon>
        <taxon>Ascomycota</taxon>
        <taxon>Saccharomycotina</taxon>
        <taxon>Saccharomycetes</taxon>
        <taxon>Saccharomycetales</taxon>
        <taxon>Saccharomycetaceae</taxon>
        <taxon>Nakaseomyces</taxon>
    </lineage>
</organism>
<proteinExistence type="inferred from homology"/>
<gene>
    <name type="primary">PFA5</name>
    <name type="ordered locus">CAGL0K06347g</name>
</gene>